<gene>
    <name evidence="1" type="primary">tusD</name>
    <name type="ordered locus">YPN_3870</name>
    <name type="ORF">YP516_4395</name>
</gene>
<comment type="function">
    <text evidence="1">Part of a sulfur-relay system required for 2-thiolation of 5-methylaminomethyl-2-thiouridine (mnm(5)s(2)U) at tRNA wobble positions. Accepts sulfur from TusA and transfers it in turn to TusE.</text>
</comment>
<comment type="subunit">
    <text evidence="1">Heterohexamer, formed by a dimer of trimers. The hexameric TusBCD complex contains 2 copies each of TusB, TusC and TusD. The TusBCD complex interacts with TusE.</text>
</comment>
<comment type="subcellular location">
    <subcellularLocation>
        <location evidence="1">Cytoplasm</location>
    </subcellularLocation>
</comment>
<comment type="similarity">
    <text evidence="1">Belongs to the DsrE/TusD family.</text>
</comment>
<sequence length="131" mass="13959">MSALKYCLLVTGPAYGTQQASSAYQFAQAVVGAGHHLVSIFFYREGVLNANQLTAPASDEFDLVRAWQQLAAEQAVTLNVCVAAALRRGITDQHEAEQLNLAAANLQPGFTLSGLGALAEATLTCDRMVQF</sequence>
<dbReference type="EC" id="2.8.1.-" evidence="1"/>
<dbReference type="EMBL" id="CP000305">
    <property type="protein sequence ID" value="ABG20197.1"/>
    <property type="molecule type" value="Genomic_DNA"/>
</dbReference>
<dbReference type="EMBL" id="ACNQ01000019">
    <property type="protein sequence ID" value="EEO74785.1"/>
    <property type="molecule type" value="Genomic_DNA"/>
</dbReference>
<dbReference type="RefSeq" id="WP_002212320.1">
    <property type="nucleotide sequence ID" value="NZ_ACNQ01000019.1"/>
</dbReference>
<dbReference type="SMR" id="Q1CCT3"/>
<dbReference type="GeneID" id="57974406"/>
<dbReference type="KEGG" id="ypn:YPN_3870"/>
<dbReference type="HOGENOM" id="CLU_132095_0_0_6"/>
<dbReference type="Proteomes" id="UP000008936">
    <property type="component" value="Chromosome"/>
</dbReference>
<dbReference type="GO" id="GO:1990228">
    <property type="term" value="C:sulfurtransferase complex"/>
    <property type="evidence" value="ECO:0007669"/>
    <property type="project" value="TreeGrafter"/>
</dbReference>
<dbReference type="GO" id="GO:0097163">
    <property type="term" value="F:sulfur carrier activity"/>
    <property type="evidence" value="ECO:0007669"/>
    <property type="project" value="TreeGrafter"/>
</dbReference>
<dbReference type="GO" id="GO:0016783">
    <property type="term" value="F:sulfurtransferase activity"/>
    <property type="evidence" value="ECO:0007669"/>
    <property type="project" value="UniProtKB-UniRule"/>
</dbReference>
<dbReference type="GO" id="GO:0002143">
    <property type="term" value="P:tRNA wobble position uridine thiolation"/>
    <property type="evidence" value="ECO:0007669"/>
    <property type="project" value="TreeGrafter"/>
</dbReference>
<dbReference type="FunFam" id="3.40.1260.10:FF:000001">
    <property type="entry name" value="Sulfurtransferase TusD"/>
    <property type="match status" value="1"/>
</dbReference>
<dbReference type="Gene3D" id="3.40.1260.10">
    <property type="entry name" value="DsrEFH-like"/>
    <property type="match status" value="1"/>
</dbReference>
<dbReference type="HAMAP" id="MF_00390">
    <property type="entry name" value="Thiourid_synth_D"/>
    <property type="match status" value="1"/>
</dbReference>
<dbReference type="InterPro" id="IPR027396">
    <property type="entry name" value="DsrEFH-like"/>
</dbReference>
<dbReference type="InterPro" id="IPR003787">
    <property type="entry name" value="Sulphur_relay_DsrE/F-like"/>
</dbReference>
<dbReference type="InterPro" id="IPR017463">
    <property type="entry name" value="Sulphur_relay_TusD/DsrE"/>
</dbReference>
<dbReference type="NCBIfam" id="NF001237">
    <property type="entry name" value="PRK00207.1"/>
    <property type="match status" value="1"/>
</dbReference>
<dbReference type="NCBIfam" id="TIGR03012">
    <property type="entry name" value="sulf_tusD_dsrE"/>
    <property type="match status" value="1"/>
</dbReference>
<dbReference type="PANTHER" id="PTHR34874">
    <property type="entry name" value="PROTEIN YCHN"/>
    <property type="match status" value="1"/>
</dbReference>
<dbReference type="PANTHER" id="PTHR34874:SF3">
    <property type="entry name" value="SULFURTRANSFERASE TUSD"/>
    <property type="match status" value="1"/>
</dbReference>
<dbReference type="Pfam" id="PF02635">
    <property type="entry name" value="DsrE"/>
    <property type="match status" value="1"/>
</dbReference>
<dbReference type="SUPFAM" id="SSF75169">
    <property type="entry name" value="DsrEFH-like"/>
    <property type="match status" value="1"/>
</dbReference>
<name>TUSD_YERPN</name>
<protein>
    <recommendedName>
        <fullName evidence="1">Sulfurtransferase TusD</fullName>
        <ecNumber evidence="1">2.8.1.-</ecNumber>
    </recommendedName>
    <alternativeName>
        <fullName evidence="1">tRNA 2-thiouridine synthesizing protein D</fullName>
    </alternativeName>
</protein>
<keyword id="KW-0963">Cytoplasm</keyword>
<keyword id="KW-0808">Transferase</keyword>
<keyword id="KW-0819">tRNA processing</keyword>
<proteinExistence type="inferred from homology"/>
<evidence type="ECO:0000255" key="1">
    <source>
        <dbReference type="HAMAP-Rule" id="MF_00390"/>
    </source>
</evidence>
<organism>
    <name type="scientific">Yersinia pestis bv. Antiqua (strain Nepal516)</name>
    <dbReference type="NCBI Taxonomy" id="377628"/>
    <lineage>
        <taxon>Bacteria</taxon>
        <taxon>Pseudomonadati</taxon>
        <taxon>Pseudomonadota</taxon>
        <taxon>Gammaproteobacteria</taxon>
        <taxon>Enterobacterales</taxon>
        <taxon>Yersiniaceae</taxon>
        <taxon>Yersinia</taxon>
    </lineage>
</organism>
<feature type="chain" id="PRO_1000013259" description="Sulfurtransferase TusD">
    <location>
        <begin position="1"/>
        <end position="131"/>
    </location>
</feature>
<feature type="active site" description="Cysteine persulfide intermediate" evidence="1">
    <location>
        <position position="81"/>
    </location>
</feature>
<reference key="1">
    <citation type="journal article" date="2006" name="J. Bacteriol.">
        <title>Complete genome sequence of Yersinia pestis strains Antiqua and Nepal516: evidence of gene reduction in an emerging pathogen.</title>
        <authorList>
            <person name="Chain P.S.G."/>
            <person name="Hu P."/>
            <person name="Malfatti S.A."/>
            <person name="Radnedge L."/>
            <person name="Larimer F."/>
            <person name="Vergez L.M."/>
            <person name="Worsham P."/>
            <person name="Chu M.C."/>
            <person name="Andersen G.L."/>
        </authorList>
    </citation>
    <scope>NUCLEOTIDE SEQUENCE [LARGE SCALE GENOMIC DNA]</scope>
    <source>
        <strain>Nepal516</strain>
    </source>
</reference>
<reference key="2">
    <citation type="submission" date="2009-04" db="EMBL/GenBank/DDBJ databases">
        <title>Yersinia pestis Nepal516A whole genome shotgun sequencing project.</title>
        <authorList>
            <person name="Plunkett G. III"/>
            <person name="Anderson B.D."/>
            <person name="Baumler D.J."/>
            <person name="Burland V."/>
            <person name="Cabot E.L."/>
            <person name="Glasner J.D."/>
            <person name="Mau B."/>
            <person name="Neeno-Eckwall E."/>
            <person name="Perna N.T."/>
            <person name="Munk A.C."/>
            <person name="Tapia R."/>
            <person name="Green L.D."/>
            <person name="Rogers Y.C."/>
            <person name="Detter J.C."/>
            <person name="Bruce D.C."/>
            <person name="Brettin T.S."/>
        </authorList>
    </citation>
    <scope>NUCLEOTIDE SEQUENCE [LARGE SCALE GENOMIC DNA]</scope>
    <source>
        <strain>Nepal516</strain>
    </source>
</reference>
<accession>Q1CCT3</accession>
<accession>D1Q2N2</accession>